<gene>
    <name evidence="1" type="primary">cbbZ</name>
    <name type="ordered locus">Rsph17029_2937</name>
</gene>
<reference key="1">
    <citation type="submission" date="2007-02" db="EMBL/GenBank/DDBJ databases">
        <title>Complete sequence of chromosome 1 of Rhodobacter sphaeroides ATCC 17029.</title>
        <authorList>
            <person name="Copeland A."/>
            <person name="Lucas S."/>
            <person name="Lapidus A."/>
            <person name="Barry K."/>
            <person name="Detter J.C."/>
            <person name="Glavina del Rio T."/>
            <person name="Hammon N."/>
            <person name="Israni S."/>
            <person name="Dalin E."/>
            <person name="Tice H."/>
            <person name="Pitluck S."/>
            <person name="Kiss H."/>
            <person name="Brettin T."/>
            <person name="Bruce D."/>
            <person name="Han C."/>
            <person name="Tapia R."/>
            <person name="Gilna P."/>
            <person name="Schmutz J."/>
            <person name="Larimer F."/>
            <person name="Land M."/>
            <person name="Hauser L."/>
            <person name="Kyrpides N."/>
            <person name="Mikhailova N."/>
            <person name="Richardson P."/>
            <person name="Mackenzie C."/>
            <person name="Choudhary M."/>
            <person name="Donohue T.J."/>
            <person name="Kaplan S."/>
        </authorList>
    </citation>
    <scope>NUCLEOTIDE SEQUENCE [LARGE SCALE GENOMIC DNA]</scope>
    <source>
        <strain>ATCC 17029 / ATH 2.4.9</strain>
    </source>
</reference>
<dbReference type="EC" id="3.1.3.18" evidence="1"/>
<dbReference type="EMBL" id="CP000577">
    <property type="protein sequence ID" value="ABN78039.1"/>
    <property type="molecule type" value="Genomic_DNA"/>
</dbReference>
<dbReference type="SMR" id="A3PNX3"/>
<dbReference type="KEGG" id="rsh:Rsph17029_2937"/>
<dbReference type="HOGENOM" id="CLU_045011_19_1_5"/>
<dbReference type="UniPathway" id="UPA00865">
    <property type="reaction ID" value="UER00834"/>
</dbReference>
<dbReference type="GO" id="GO:0005829">
    <property type="term" value="C:cytosol"/>
    <property type="evidence" value="ECO:0007669"/>
    <property type="project" value="TreeGrafter"/>
</dbReference>
<dbReference type="GO" id="GO:0046872">
    <property type="term" value="F:metal ion binding"/>
    <property type="evidence" value="ECO:0007669"/>
    <property type="project" value="UniProtKB-KW"/>
</dbReference>
<dbReference type="GO" id="GO:0008967">
    <property type="term" value="F:phosphoglycolate phosphatase activity"/>
    <property type="evidence" value="ECO:0007669"/>
    <property type="project" value="UniProtKB-UniRule"/>
</dbReference>
<dbReference type="GO" id="GO:0006281">
    <property type="term" value="P:DNA repair"/>
    <property type="evidence" value="ECO:0007669"/>
    <property type="project" value="TreeGrafter"/>
</dbReference>
<dbReference type="GO" id="GO:0046295">
    <property type="term" value="P:glycolate biosynthetic process"/>
    <property type="evidence" value="ECO:0007669"/>
    <property type="project" value="UniProtKB-UniRule"/>
</dbReference>
<dbReference type="GO" id="GO:0019253">
    <property type="term" value="P:reductive pentose-phosphate cycle"/>
    <property type="evidence" value="ECO:0007669"/>
    <property type="project" value="UniProtKB-KW"/>
</dbReference>
<dbReference type="CDD" id="cd07512">
    <property type="entry name" value="HAD_PGPase"/>
    <property type="match status" value="1"/>
</dbReference>
<dbReference type="Gene3D" id="3.40.50.1000">
    <property type="entry name" value="HAD superfamily/HAD-like"/>
    <property type="match status" value="1"/>
</dbReference>
<dbReference type="Gene3D" id="1.10.150.240">
    <property type="entry name" value="Putative phosphatase, domain 2"/>
    <property type="match status" value="1"/>
</dbReference>
<dbReference type="HAMAP" id="MF_00495">
    <property type="entry name" value="GPH_hydrolase_bact"/>
    <property type="match status" value="1"/>
</dbReference>
<dbReference type="InterPro" id="IPR050155">
    <property type="entry name" value="HAD-like_hydrolase_sf"/>
</dbReference>
<dbReference type="InterPro" id="IPR036412">
    <property type="entry name" value="HAD-like_sf"/>
</dbReference>
<dbReference type="InterPro" id="IPR006439">
    <property type="entry name" value="HAD-SF_hydro_IA"/>
</dbReference>
<dbReference type="InterPro" id="IPR023214">
    <property type="entry name" value="HAD_sf"/>
</dbReference>
<dbReference type="InterPro" id="IPR023198">
    <property type="entry name" value="PGP-like_dom2"/>
</dbReference>
<dbReference type="InterPro" id="IPR037512">
    <property type="entry name" value="PGPase_prok"/>
</dbReference>
<dbReference type="NCBIfam" id="TIGR01549">
    <property type="entry name" value="HAD-SF-IA-v1"/>
    <property type="match status" value="1"/>
</dbReference>
<dbReference type="NCBIfam" id="TIGR01449">
    <property type="entry name" value="PGP_bact"/>
    <property type="match status" value="1"/>
</dbReference>
<dbReference type="PANTHER" id="PTHR43434">
    <property type="entry name" value="PHOSPHOGLYCOLATE PHOSPHATASE"/>
    <property type="match status" value="1"/>
</dbReference>
<dbReference type="PANTHER" id="PTHR43434:SF1">
    <property type="entry name" value="PHOSPHOGLYCOLATE PHOSPHATASE"/>
    <property type="match status" value="1"/>
</dbReference>
<dbReference type="Pfam" id="PF00702">
    <property type="entry name" value="Hydrolase"/>
    <property type="match status" value="1"/>
</dbReference>
<dbReference type="PRINTS" id="PR00413">
    <property type="entry name" value="HADHALOGNASE"/>
</dbReference>
<dbReference type="SFLD" id="SFLDG01135">
    <property type="entry name" value="C1.5.6:_HAD__Beta-PGM__Phospha"/>
    <property type="match status" value="1"/>
</dbReference>
<dbReference type="SFLD" id="SFLDG01129">
    <property type="entry name" value="C1.5:_HAD__Beta-PGM__Phosphata"/>
    <property type="match status" value="1"/>
</dbReference>
<dbReference type="SUPFAM" id="SSF56784">
    <property type="entry name" value="HAD-like"/>
    <property type="match status" value="1"/>
</dbReference>
<proteinExistence type="inferred from homology"/>
<sequence length="218" mass="23279">MPGVVFDLDGTLVHSAPDIHAAVNKALAEEGGAPFTLAEITGFIGNGVPVLIQRVLAARGEAPDAHRQAELQGRFMAHYEADPATLTSVYPGAEAAIRHLRAEGWRIGLCTNKPVGASRQILSLFGLLELFDAIIGGDSLPQRKPDPAPLRATAAALNEEVVLYVGDSEVDAATAEAAGLRFALFTEGYRHAPVHELPHHGLFSHHDELPDLLRRLLA</sequence>
<protein>
    <recommendedName>
        <fullName evidence="1">Phosphoglycolate phosphatase</fullName>
        <shortName evidence="1">PGP</shortName>
        <shortName evidence="1">PGPase</shortName>
        <ecNumber evidence="1">3.1.3.18</ecNumber>
    </recommendedName>
</protein>
<name>GPH_CERS1</name>
<accession>A3PNX3</accession>
<feature type="chain" id="PRO_1000050595" description="Phosphoglycolate phosphatase">
    <location>
        <begin position="1"/>
        <end position="218"/>
    </location>
</feature>
<feature type="active site" description="Nucleophile" evidence="1">
    <location>
        <position position="7"/>
    </location>
</feature>
<feature type="binding site" evidence="1">
    <location>
        <position position="7"/>
    </location>
    <ligand>
        <name>Mg(2+)</name>
        <dbReference type="ChEBI" id="CHEBI:18420"/>
    </ligand>
</feature>
<feature type="binding site" evidence="1">
    <location>
        <position position="9"/>
    </location>
    <ligand>
        <name>Mg(2+)</name>
        <dbReference type="ChEBI" id="CHEBI:18420"/>
    </ligand>
</feature>
<feature type="binding site" evidence="1">
    <location>
        <position position="167"/>
    </location>
    <ligand>
        <name>Mg(2+)</name>
        <dbReference type="ChEBI" id="CHEBI:18420"/>
    </ligand>
</feature>
<keyword id="KW-0113">Calvin cycle</keyword>
<keyword id="KW-0119">Carbohydrate metabolism</keyword>
<keyword id="KW-0378">Hydrolase</keyword>
<keyword id="KW-0460">Magnesium</keyword>
<keyword id="KW-0479">Metal-binding</keyword>
<keyword id="KW-0602">Photosynthesis</keyword>
<evidence type="ECO:0000255" key="1">
    <source>
        <dbReference type="HAMAP-Rule" id="MF_00495"/>
    </source>
</evidence>
<comment type="function">
    <text evidence="1">Specifically catalyzes the dephosphorylation of 2-phosphoglycolate. Is involved in the dissimilation of the intracellular 2-phosphoglycolate formed during the DNA repair of 3'-phosphoglycolate ends, a major class of DNA lesions induced by oxidative stress.</text>
</comment>
<comment type="catalytic activity">
    <reaction evidence="1">
        <text>2-phosphoglycolate + H2O = glycolate + phosphate</text>
        <dbReference type="Rhea" id="RHEA:14369"/>
        <dbReference type="ChEBI" id="CHEBI:15377"/>
        <dbReference type="ChEBI" id="CHEBI:29805"/>
        <dbReference type="ChEBI" id="CHEBI:43474"/>
        <dbReference type="ChEBI" id="CHEBI:58033"/>
        <dbReference type="EC" id="3.1.3.18"/>
    </reaction>
</comment>
<comment type="cofactor">
    <cofactor evidence="1">
        <name>Mg(2+)</name>
        <dbReference type="ChEBI" id="CHEBI:18420"/>
    </cofactor>
</comment>
<comment type="pathway">
    <text evidence="1">Organic acid metabolism; glycolate biosynthesis; glycolate from 2-phosphoglycolate: step 1/1.</text>
</comment>
<comment type="similarity">
    <text evidence="1">Belongs to the HAD-like hydrolase superfamily. CbbY/CbbZ/Gph/YieH family.</text>
</comment>
<organism>
    <name type="scientific">Cereibacter sphaeroides (strain ATCC 17029 / ATH 2.4.9)</name>
    <name type="common">Rhodobacter sphaeroides</name>
    <dbReference type="NCBI Taxonomy" id="349101"/>
    <lineage>
        <taxon>Bacteria</taxon>
        <taxon>Pseudomonadati</taxon>
        <taxon>Pseudomonadota</taxon>
        <taxon>Alphaproteobacteria</taxon>
        <taxon>Rhodobacterales</taxon>
        <taxon>Paracoccaceae</taxon>
        <taxon>Cereibacter</taxon>
    </lineage>
</organism>